<reference key="1">
    <citation type="submission" date="1997-07" db="EMBL/GenBank/DDBJ databases">
        <title>Sequence analysis of the 70kb region between 17 and 23 degree of the Bacillus subtilis chromosome.</title>
        <authorList>
            <person name="Haga K."/>
            <person name="Liu H."/>
            <person name="Yasumoto K."/>
            <person name="Takahashi H."/>
            <person name="Yoshikawa H."/>
        </authorList>
    </citation>
    <scope>NUCLEOTIDE SEQUENCE [GENOMIC DNA]</scope>
    <source>
        <strain>168</strain>
    </source>
</reference>
<reference key="2">
    <citation type="journal article" date="1997" name="Nature">
        <title>The complete genome sequence of the Gram-positive bacterium Bacillus subtilis.</title>
        <authorList>
            <person name="Kunst F."/>
            <person name="Ogasawara N."/>
            <person name="Moszer I."/>
            <person name="Albertini A.M."/>
            <person name="Alloni G."/>
            <person name="Azevedo V."/>
            <person name="Bertero M.G."/>
            <person name="Bessieres P."/>
            <person name="Bolotin A."/>
            <person name="Borchert S."/>
            <person name="Borriss R."/>
            <person name="Boursier L."/>
            <person name="Brans A."/>
            <person name="Braun M."/>
            <person name="Brignell S.C."/>
            <person name="Bron S."/>
            <person name="Brouillet S."/>
            <person name="Bruschi C.V."/>
            <person name="Caldwell B."/>
            <person name="Capuano V."/>
            <person name="Carter N.M."/>
            <person name="Choi S.-K."/>
            <person name="Codani J.-J."/>
            <person name="Connerton I.F."/>
            <person name="Cummings N.J."/>
            <person name="Daniel R.A."/>
            <person name="Denizot F."/>
            <person name="Devine K.M."/>
            <person name="Duesterhoeft A."/>
            <person name="Ehrlich S.D."/>
            <person name="Emmerson P.T."/>
            <person name="Entian K.-D."/>
            <person name="Errington J."/>
            <person name="Fabret C."/>
            <person name="Ferrari E."/>
            <person name="Foulger D."/>
            <person name="Fritz C."/>
            <person name="Fujita M."/>
            <person name="Fujita Y."/>
            <person name="Fuma S."/>
            <person name="Galizzi A."/>
            <person name="Galleron N."/>
            <person name="Ghim S.-Y."/>
            <person name="Glaser P."/>
            <person name="Goffeau A."/>
            <person name="Golightly E.J."/>
            <person name="Grandi G."/>
            <person name="Guiseppi G."/>
            <person name="Guy B.J."/>
            <person name="Haga K."/>
            <person name="Haiech J."/>
            <person name="Harwood C.R."/>
            <person name="Henaut A."/>
            <person name="Hilbert H."/>
            <person name="Holsappel S."/>
            <person name="Hosono S."/>
            <person name="Hullo M.-F."/>
            <person name="Itaya M."/>
            <person name="Jones L.-M."/>
            <person name="Joris B."/>
            <person name="Karamata D."/>
            <person name="Kasahara Y."/>
            <person name="Klaerr-Blanchard M."/>
            <person name="Klein C."/>
            <person name="Kobayashi Y."/>
            <person name="Koetter P."/>
            <person name="Koningstein G."/>
            <person name="Krogh S."/>
            <person name="Kumano M."/>
            <person name="Kurita K."/>
            <person name="Lapidus A."/>
            <person name="Lardinois S."/>
            <person name="Lauber J."/>
            <person name="Lazarevic V."/>
            <person name="Lee S.-M."/>
            <person name="Levine A."/>
            <person name="Liu H."/>
            <person name="Masuda S."/>
            <person name="Mauel C."/>
            <person name="Medigue C."/>
            <person name="Medina N."/>
            <person name="Mellado R.P."/>
            <person name="Mizuno M."/>
            <person name="Moestl D."/>
            <person name="Nakai S."/>
            <person name="Noback M."/>
            <person name="Noone D."/>
            <person name="O'Reilly M."/>
            <person name="Ogawa K."/>
            <person name="Ogiwara A."/>
            <person name="Oudega B."/>
            <person name="Park S.-H."/>
            <person name="Parro V."/>
            <person name="Pohl T.M."/>
            <person name="Portetelle D."/>
            <person name="Porwollik S."/>
            <person name="Prescott A.M."/>
            <person name="Presecan E."/>
            <person name="Pujic P."/>
            <person name="Purnelle B."/>
            <person name="Rapoport G."/>
            <person name="Rey M."/>
            <person name="Reynolds S."/>
            <person name="Rieger M."/>
            <person name="Rivolta C."/>
            <person name="Rocha E."/>
            <person name="Roche B."/>
            <person name="Rose M."/>
            <person name="Sadaie Y."/>
            <person name="Sato T."/>
            <person name="Scanlan E."/>
            <person name="Schleich S."/>
            <person name="Schroeter R."/>
            <person name="Scoffone F."/>
            <person name="Sekiguchi J."/>
            <person name="Sekowska A."/>
            <person name="Seror S.J."/>
            <person name="Serror P."/>
            <person name="Shin B.-S."/>
            <person name="Soldo B."/>
            <person name="Sorokin A."/>
            <person name="Tacconi E."/>
            <person name="Takagi T."/>
            <person name="Takahashi H."/>
            <person name="Takemaru K."/>
            <person name="Takeuchi M."/>
            <person name="Tamakoshi A."/>
            <person name="Tanaka T."/>
            <person name="Terpstra P."/>
            <person name="Tognoni A."/>
            <person name="Tosato V."/>
            <person name="Uchiyama S."/>
            <person name="Vandenbol M."/>
            <person name="Vannier F."/>
            <person name="Vassarotti A."/>
            <person name="Viari A."/>
            <person name="Wambutt R."/>
            <person name="Wedler E."/>
            <person name="Wedler H."/>
            <person name="Weitzenegger T."/>
            <person name="Winters P."/>
            <person name="Wipat A."/>
            <person name="Yamamoto H."/>
            <person name="Yamane K."/>
            <person name="Yasumoto K."/>
            <person name="Yata K."/>
            <person name="Yoshida K."/>
            <person name="Yoshikawa H.-F."/>
            <person name="Zumstein E."/>
            <person name="Yoshikawa H."/>
            <person name="Danchin A."/>
        </authorList>
    </citation>
    <scope>NUCLEOTIDE SEQUENCE [LARGE SCALE GENOMIC DNA]</scope>
    <source>
        <strain>168</strain>
    </source>
</reference>
<keyword id="KW-1185">Reference proteome</keyword>
<name>YBCH_BACSU</name>
<accession>O34795</accession>
<sequence length="96" mass="11359">MSANLTDFVTKTIEEMNSFDRENMECIKKLIRKAIDFYHLKSYEEVEETHSGNVRFLHVHSMMEENMLSKMIVVTRNGKTDLDIEGVYEGYVVREY</sequence>
<organism>
    <name type="scientific">Bacillus subtilis (strain 168)</name>
    <dbReference type="NCBI Taxonomy" id="224308"/>
    <lineage>
        <taxon>Bacteria</taxon>
        <taxon>Bacillati</taxon>
        <taxon>Bacillota</taxon>
        <taxon>Bacilli</taxon>
        <taxon>Bacillales</taxon>
        <taxon>Bacillaceae</taxon>
        <taxon>Bacillus</taxon>
    </lineage>
</organism>
<proteinExistence type="predicted"/>
<feature type="chain" id="PRO_0000049458" description="Uncharacterized protein YbcH">
    <location>
        <begin position="1"/>
        <end position="96"/>
    </location>
</feature>
<gene>
    <name type="primary">ybcH</name>
    <name type="ordered locus">BSU01870</name>
</gene>
<dbReference type="EMBL" id="AB006424">
    <property type="protein sequence ID" value="BAA33080.1"/>
    <property type="molecule type" value="Genomic_DNA"/>
</dbReference>
<dbReference type="EMBL" id="AL009126">
    <property type="protein sequence ID" value="CAB11963.1"/>
    <property type="molecule type" value="Genomic_DNA"/>
</dbReference>
<dbReference type="PIR" id="G69745">
    <property type="entry name" value="G69745"/>
</dbReference>
<dbReference type="RefSeq" id="NP_388068.1">
    <property type="nucleotide sequence ID" value="NC_000964.3"/>
</dbReference>
<dbReference type="RefSeq" id="WP_003234913.1">
    <property type="nucleotide sequence ID" value="NZ_OZ025638.1"/>
</dbReference>
<dbReference type="FunCoup" id="O34795">
    <property type="interactions" value="45"/>
</dbReference>
<dbReference type="STRING" id="224308.BSU01870"/>
<dbReference type="PaxDb" id="224308-BSU01870"/>
<dbReference type="EnsemblBacteria" id="CAB11963">
    <property type="protein sequence ID" value="CAB11963"/>
    <property type="gene ID" value="BSU_01870"/>
</dbReference>
<dbReference type="GeneID" id="938573"/>
<dbReference type="KEGG" id="bsu:BSU01870"/>
<dbReference type="PATRIC" id="fig|224308.179.peg.192"/>
<dbReference type="eggNOG" id="ENOG50328YS">
    <property type="taxonomic scope" value="Bacteria"/>
</dbReference>
<dbReference type="InParanoid" id="O34795"/>
<dbReference type="OrthoDB" id="2941692at2"/>
<dbReference type="BioCyc" id="BSUB:BSU01870-MONOMER"/>
<dbReference type="Proteomes" id="UP000001570">
    <property type="component" value="Chromosome"/>
</dbReference>
<dbReference type="InterPro" id="IPR045640">
    <property type="entry name" value="DUF6407"/>
</dbReference>
<dbReference type="Pfam" id="PF19945">
    <property type="entry name" value="DUF6407"/>
    <property type="match status" value="1"/>
</dbReference>
<protein>
    <recommendedName>
        <fullName>Uncharacterized protein YbcH</fullName>
    </recommendedName>
</protein>